<evidence type="ECO:0000255" key="1">
    <source>
        <dbReference type="HAMAP-Rule" id="MF_00034"/>
    </source>
</evidence>
<dbReference type="EC" id="3.1.21.10" evidence="1"/>
<dbReference type="EMBL" id="CP000633">
    <property type="protein sequence ID" value="ACM37596.1"/>
    <property type="molecule type" value="Genomic_DNA"/>
</dbReference>
<dbReference type="RefSeq" id="WP_015917009.1">
    <property type="nucleotide sequence ID" value="NC_011989.1"/>
</dbReference>
<dbReference type="SMR" id="B9JRI5"/>
<dbReference type="STRING" id="311402.Avi_3604"/>
<dbReference type="KEGG" id="avi:Avi_3604"/>
<dbReference type="eggNOG" id="COG0817">
    <property type="taxonomic scope" value="Bacteria"/>
</dbReference>
<dbReference type="HOGENOM" id="CLU_091257_1_0_5"/>
<dbReference type="Proteomes" id="UP000001596">
    <property type="component" value="Chromosome 1"/>
</dbReference>
<dbReference type="GO" id="GO:0005737">
    <property type="term" value="C:cytoplasm"/>
    <property type="evidence" value="ECO:0007669"/>
    <property type="project" value="UniProtKB-SubCell"/>
</dbReference>
<dbReference type="GO" id="GO:0048476">
    <property type="term" value="C:Holliday junction resolvase complex"/>
    <property type="evidence" value="ECO:0007669"/>
    <property type="project" value="UniProtKB-UniRule"/>
</dbReference>
<dbReference type="GO" id="GO:0008821">
    <property type="term" value="F:crossover junction DNA endonuclease activity"/>
    <property type="evidence" value="ECO:0007669"/>
    <property type="project" value="UniProtKB-UniRule"/>
</dbReference>
<dbReference type="GO" id="GO:0003677">
    <property type="term" value="F:DNA binding"/>
    <property type="evidence" value="ECO:0007669"/>
    <property type="project" value="UniProtKB-KW"/>
</dbReference>
<dbReference type="GO" id="GO:0000287">
    <property type="term" value="F:magnesium ion binding"/>
    <property type="evidence" value="ECO:0007669"/>
    <property type="project" value="UniProtKB-UniRule"/>
</dbReference>
<dbReference type="GO" id="GO:0006310">
    <property type="term" value="P:DNA recombination"/>
    <property type="evidence" value="ECO:0007669"/>
    <property type="project" value="UniProtKB-UniRule"/>
</dbReference>
<dbReference type="GO" id="GO:0006281">
    <property type="term" value="P:DNA repair"/>
    <property type="evidence" value="ECO:0007669"/>
    <property type="project" value="UniProtKB-UniRule"/>
</dbReference>
<dbReference type="CDD" id="cd16962">
    <property type="entry name" value="RuvC"/>
    <property type="match status" value="1"/>
</dbReference>
<dbReference type="FunFam" id="3.30.420.10:FF:000002">
    <property type="entry name" value="Crossover junction endodeoxyribonuclease RuvC"/>
    <property type="match status" value="1"/>
</dbReference>
<dbReference type="Gene3D" id="3.30.420.10">
    <property type="entry name" value="Ribonuclease H-like superfamily/Ribonuclease H"/>
    <property type="match status" value="1"/>
</dbReference>
<dbReference type="HAMAP" id="MF_00034">
    <property type="entry name" value="RuvC"/>
    <property type="match status" value="1"/>
</dbReference>
<dbReference type="InterPro" id="IPR012337">
    <property type="entry name" value="RNaseH-like_sf"/>
</dbReference>
<dbReference type="InterPro" id="IPR036397">
    <property type="entry name" value="RNaseH_sf"/>
</dbReference>
<dbReference type="InterPro" id="IPR020563">
    <property type="entry name" value="X-over_junc_endoDNase_Mg_BS"/>
</dbReference>
<dbReference type="InterPro" id="IPR002176">
    <property type="entry name" value="X-over_junc_endoDNase_RuvC"/>
</dbReference>
<dbReference type="NCBIfam" id="TIGR00228">
    <property type="entry name" value="ruvC"/>
    <property type="match status" value="1"/>
</dbReference>
<dbReference type="PANTHER" id="PTHR30194">
    <property type="entry name" value="CROSSOVER JUNCTION ENDODEOXYRIBONUCLEASE RUVC"/>
    <property type="match status" value="1"/>
</dbReference>
<dbReference type="PANTHER" id="PTHR30194:SF3">
    <property type="entry name" value="CROSSOVER JUNCTION ENDODEOXYRIBONUCLEASE RUVC"/>
    <property type="match status" value="1"/>
</dbReference>
<dbReference type="Pfam" id="PF02075">
    <property type="entry name" value="RuvC"/>
    <property type="match status" value="1"/>
</dbReference>
<dbReference type="PRINTS" id="PR00696">
    <property type="entry name" value="RSOLVASERUVC"/>
</dbReference>
<dbReference type="SUPFAM" id="SSF53098">
    <property type="entry name" value="Ribonuclease H-like"/>
    <property type="match status" value="1"/>
</dbReference>
<dbReference type="PROSITE" id="PS01321">
    <property type="entry name" value="RUVC"/>
    <property type="match status" value="1"/>
</dbReference>
<sequence>MTSAIRIIGIDPGLRRTGWGVIETLGNSLRFIASGTVMSDGDMDLASRLCQLHDGLADVVHLHQPDEAAVEQTFVNKDAVATLKLGQARGIAMLVPARAGLPVAEYAPNAVKKSVIGVGHGDKQQIHMMLKILMPKAEFKGNDAADALAIAICHAHNRGGERMRRALAG</sequence>
<accession>B9JRI5</accession>
<feature type="chain" id="PRO_1000195231" description="Crossover junction endodeoxyribonuclease RuvC">
    <location>
        <begin position="1"/>
        <end position="169"/>
    </location>
</feature>
<feature type="active site" evidence="1">
    <location>
        <position position="11"/>
    </location>
</feature>
<feature type="active site" evidence="1">
    <location>
        <position position="71"/>
    </location>
</feature>
<feature type="active site" evidence="1">
    <location>
        <position position="143"/>
    </location>
</feature>
<feature type="binding site" evidence="1">
    <location>
        <position position="11"/>
    </location>
    <ligand>
        <name>Mg(2+)</name>
        <dbReference type="ChEBI" id="CHEBI:18420"/>
        <label>1</label>
    </ligand>
</feature>
<feature type="binding site" evidence="1">
    <location>
        <position position="71"/>
    </location>
    <ligand>
        <name>Mg(2+)</name>
        <dbReference type="ChEBI" id="CHEBI:18420"/>
        <label>2</label>
    </ligand>
</feature>
<feature type="binding site" evidence="1">
    <location>
        <position position="143"/>
    </location>
    <ligand>
        <name>Mg(2+)</name>
        <dbReference type="ChEBI" id="CHEBI:18420"/>
        <label>1</label>
    </ligand>
</feature>
<comment type="function">
    <text evidence="1">The RuvA-RuvB-RuvC complex processes Holliday junction (HJ) DNA during genetic recombination and DNA repair. Endonuclease that resolves HJ intermediates. Cleaves cruciform DNA by making single-stranded nicks across the HJ at symmetrical positions within the homologous arms, yielding a 5'-phosphate and a 3'-hydroxyl group; requires a central core of homology in the junction. The consensus cleavage sequence is 5'-(A/T)TT(C/G)-3'. Cleavage occurs on the 3'-side of the TT dinucleotide at the point of strand exchange. HJ branch migration catalyzed by RuvA-RuvB allows RuvC to scan DNA until it finds its consensus sequence, where it cleaves and resolves the cruciform DNA.</text>
</comment>
<comment type="catalytic activity">
    <reaction evidence="1">
        <text>Endonucleolytic cleavage at a junction such as a reciprocal single-stranded crossover between two homologous DNA duplexes (Holliday junction).</text>
        <dbReference type="EC" id="3.1.21.10"/>
    </reaction>
</comment>
<comment type="cofactor">
    <cofactor evidence="1">
        <name>Mg(2+)</name>
        <dbReference type="ChEBI" id="CHEBI:18420"/>
    </cofactor>
    <text evidence="1">Binds 2 Mg(2+) ion per subunit.</text>
</comment>
<comment type="subunit">
    <text evidence="1">Homodimer which binds Holliday junction (HJ) DNA. The HJ becomes 2-fold symmetrical on binding to RuvC with unstacked arms; it has a different conformation from HJ DNA in complex with RuvA. In the full resolvosome a probable DNA-RuvA(4)-RuvB(12)-RuvC(2) complex forms which resolves the HJ.</text>
</comment>
<comment type="subcellular location">
    <subcellularLocation>
        <location evidence="1">Cytoplasm</location>
    </subcellularLocation>
</comment>
<comment type="similarity">
    <text evidence="1">Belongs to the RuvC family.</text>
</comment>
<reference key="1">
    <citation type="journal article" date="2009" name="J. Bacteriol.">
        <title>Genome sequences of three Agrobacterium biovars help elucidate the evolution of multichromosome genomes in bacteria.</title>
        <authorList>
            <person name="Slater S.C."/>
            <person name="Goldman B.S."/>
            <person name="Goodner B."/>
            <person name="Setubal J.C."/>
            <person name="Farrand S.K."/>
            <person name="Nester E.W."/>
            <person name="Burr T.J."/>
            <person name="Banta L."/>
            <person name="Dickerman A.W."/>
            <person name="Paulsen I."/>
            <person name="Otten L."/>
            <person name="Suen G."/>
            <person name="Welch R."/>
            <person name="Almeida N.F."/>
            <person name="Arnold F."/>
            <person name="Burton O.T."/>
            <person name="Du Z."/>
            <person name="Ewing A."/>
            <person name="Godsy E."/>
            <person name="Heisel S."/>
            <person name="Houmiel K.L."/>
            <person name="Jhaveri J."/>
            <person name="Lu J."/>
            <person name="Miller N.M."/>
            <person name="Norton S."/>
            <person name="Chen Q."/>
            <person name="Phoolcharoen W."/>
            <person name="Ohlin V."/>
            <person name="Ondrusek D."/>
            <person name="Pride N."/>
            <person name="Stricklin S.L."/>
            <person name="Sun J."/>
            <person name="Wheeler C."/>
            <person name="Wilson L."/>
            <person name="Zhu H."/>
            <person name="Wood D.W."/>
        </authorList>
    </citation>
    <scope>NUCLEOTIDE SEQUENCE [LARGE SCALE GENOMIC DNA]</scope>
    <source>
        <strain>ATCC BAA-846 / DSM 112012 / S4</strain>
    </source>
</reference>
<gene>
    <name evidence="1" type="primary">ruvC</name>
    <name type="ordered locus">Avi_3604</name>
</gene>
<organism>
    <name type="scientific">Allorhizobium ampelinum (strain ATCC BAA-846 / DSM 112012 / S4)</name>
    <name type="common">Agrobacterium vitis (strain S4)</name>
    <dbReference type="NCBI Taxonomy" id="311402"/>
    <lineage>
        <taxon>Bacteria</taxon>
        <taxon>Pseudomonadati</taxon>
        <taxon>Pseudomonadota</taxon>
        <taxon>Alphaproteobacteria</taxon>
        <taxon>Hyphomicrobiales</taxon>
        <taxon>Rhizobiaceae</taxon>
        <taxon>Rhizobium/Agrobacterium group</taxon>
        <taxon>Allorhizobium</taxon>
        <taxon>Allorhizobium ampelinum</taxon>
    </lineage>
</organism>
<name>RUVC_ALLAM</name>
<proteinExistence type="inferred from homology"/>
<keyword id="KW-0963">Cytoplasm</keyword>
<keyword id="KW-0227">DNA damage</keyword>
<keyword id="KW-0233">DNA recombination</keyword>
<keyword id="KW-0234">DNA repair</keyword>
<keyword id="KW-0238">DNA-binding</keyword>
<keyword id="KW-0255">Endonuclease</keyword>
<keyword id="KW-0378">Hydrolase</keyword>
<keyword id="KW-0460">Magnesium</keyword>
<keyword id="KW-0479">Metal-binding</keyword>
<keyword id="KW-0540">Nuclease</keyword>
<keyword id="KW-1185">Reference proteome</keyword>
<protein>
    <recommendedName>
        <fullName evidence="1">Crossover junction endodeoxyribonuclease RuvC</fullName>
        <ecNumber evidence="1">3.1.21.10</ecNumber>
    </recommendedName>
    <alternativeName>
        <fullName evidence="1">Holliday junction nuclease RuvC</fullName>
    </alternativeName>
    <alternativeName>
        <fullName evidence="1">Holliday junction resolvase RuvC</fullName>
    </alternativeName>
</protein>